<evidence type="ECO:0000255" key="1">
    <source>
        <dbReference type="HAMAP-Rule" id="MF_00116"/>
    </source>
</evidence>
<name>DUT_PSEE4</name>
<reference key="1">
    <citation type="journal article" date="2006" name="Nat. Biotechnol.">
        <title>Complete genome sequence of the entomopathogenic and metabolically versatile soil bacterium Pseudomonas entomophila.</title>
        <authorList>
            <person name="Vodovar N."/>
            <person name="Vallenet D."/>
            <person name="Cruveiller S."/>
            <person name="Rouy Z."/>
            <person name="Barbe V."/>
            <person name="Acosta C."/>
            <person name="Cattolico L."/>
            <person name="Jubin C."/>
            <person name="Lajus A."/>
            <person name="Segurens B."/>
            <person name="Vacherie B."/>
            <person name="Wincker P."/>
            <person name="Weissenbach J."/>
            <person name="Lemaitre B."/>
            <person name="Medigue C."/>
            <person name="Boccard F."/>
        </authorList>
    </citation>
    <scope>NUCLEOTIDE SEQUENCE [LARGE SCALE GENOMIC DNA]</scope>
    <source>
        <strain>L48</strain>
    </source>
</reference>
<feature type="chain" id="PRO_1000015495" description="Deoxyuridine 5'-triphosphate nucleotidohydrolase">
    <location>
        <begin position="1"/>
        <end position="151"/>
    </location>
</feature>
<feature type="binding site" evidence="1">
    <location>
        <begin position="70"/>
        <end position="72"/>
    </location>
    <ligand>
        <name>substrate</name>
    </ligand>
</feature>
<feature type="binding site" evidence="1">
    <location>
        <position position="83"/>
    </location>
    <ligand>
        <name>substrate</name>
    </ligand>
</feature>
<feature type="binding site" evidence="1">
    <location>
        <begin position="87"/>
        <end position="89"/>
    </location>
    <ligand>
        <name>substrate</name>
    </ligand>
</feature>
<feature type="binding site" evidence="1">
    <location>
        <position position="97"/>
    </location>
    <ligand>
        <name>substrate</name>
    </ligand>
</feature>
<proteinExistence type="inferred from homology"/>
<gene>
    <name evidence="1" type="primary">dut</name>
    <name type="ordered locus">PSEEN5433</name>
</gene>
<comment type="function">
    <text evidence="1">This enzyme is involved in nucleotide metabolism: it produces dUMP, the immediate precursor of thymidine nucleotides and it decreases the intracellular concentration of dUTP so that uracil cannot be incorporated into DNA.</text>
</comment>
<comment type="catalytic activity">
    <reaction evidence="1">
        <text>dUTP + H2O = dUMP + diphosphate + H(+)</text>
        <dbReference type="Rhea" id="RHEA:10248"/>
        <dbReference type="ChEBI" id="CHEBI:15377"/>
        <dbReference type="ChEBI" id="CHEBI:15378"/>
        <dbReference type="ChEBI" id="CHEBI:33019"/>
        <dbReference type="ChEBI" id="CHEBI:61555"/>
        <dbReference type="ChEBI" id="CHEBI:246422"/>
        <dbReference type="EC" id="3.6.1.23"/>
    </reaction>
</comment>
<comment type="cofactor">
    <cofactor evidence="1">
        <name>Mg(2+)</name>
        <dbReference type="ChEBI" id="CHEBI:18420"/>
    </cofactor>
</comment>
<comment type="pathway">
    <text evidence="1">Pyrimidine metabolism; dUMP biosynthesis; dUMP from dCTP (dUTP route): step 2/2.</text>
</comment>
<comment type="similarity">
    <text evidence="1">Belongs to the dUTPase family.</text>
</comment>
<dbReference type="EC" id="3.6.1.23" evidence="1"/>
<dbReference type="EMBL" id="CT573326">
    <property type="protein sequence ID" value="CAK18045.1"/>
    <property type="molecule type" value="Genomic_DNA"/>
</dbReference>
<dbReference type="RefSeq" id="WP_011536398.1">
    <property type="nucleotide sequence ID" value="NC_008027.1"/>
</dbReference>
<dbReference type="SMR" id="Q1I2U1"/>
<dbReference type="STRING" id="384676.PSEEN5433"/>
<dbReference type="GeneID" id="32808339"/>
<dbReference type="KEGG" id="pen:PSEEN5433"/>
<dbReference type="eggNOG" id="COG0756">
    <property type="taxonomic scope" value="Bacteria"/>
</dbReference>
<dbReference type="HOGENOM" id="CLU_068508_1_1_6"/>
<dbReference type="OrthoDB" id="9809956at2"/>
<dbReference type="UniPathway" id="UPA00610">
    <property type="reaction ID" value="UER00666"/>
</dbReference>
<dbReference type="Proteomes" id="UP000000658">
    <property type="component" value="Chromosome"/>
</dbReference>
<dbReference type="GO" id="GO:0004170">
    <property type="term" value="F:dUTP diphosphatase activity"/>
    <property type="evidence" value="ECO:0007669"/>
    <property type="project" value="UniProtKB-UniRule"/>
</dbReference>
<dbReference type="GO" id="GO:0000287">
    <property type="term" value="F:magnesium ion binding"/>
    <property type="evidence" value="ECO:0007669"/>
    <property type="project" value="UniProtKB-UniRule"/>
</dbReference>
<dbReference type="GO" id="GO:0006226">
    <property type="term" value="P:dUMP biosynthetic process"/>
    <property type="evidence" value="ECO:0007669"/>
    <property type="project" value="UniProtKB-UniRule"/>
</dbReference>
<dbReference type="GO" id="GO:0046081">
    <property type="term" value="P:dUTP catabolic process"/>
    <property type="evidence" value="ECO:0007669"/>
    <property type="project" value="InterPro"/>
</dbReference>
<dbReference type="CDD" id="cd07557">
    <property type="entry name" value="trimeric_dUTPase"/>
    <property type="match status" value="1"/>
</dbReference>
<dbReference type="FunFam" id="2.70.40.10:FF:000002">
    <property type="entry name" value="dUTP diphosphatase"/>
    <property type="match status" value="1"/>
</dbReference>
<dbReference type="Gene3D" id="2.70.40.10">
    <property type="match status" value="1"/>
</dbReference>
<dbReference type="HAMAP" id="MF_00116">
    <property type="entry name" value="dUTPase_bact"/>
    <property type="match status" value="1"/>
</dbReference>
<dbReference type="InterPro" id="IPR008181">
    <property type="entry name" value="dUTPase"/>
</dbReference>
<dbReference type="InterPro" id="IPR029054">
    <property type="entry name" value="dUTPase-like"/>
</dbReference>
<dbReference type="InterPro" id="IPR036157">
    <property type="entry name" value="dUTPase-like_sf"/>
</dbReference>
<dbReference type="InterPro" id="IPR033704">
    <property type="entry name" value="dUTPase_trimeric"/>
</dbReference>
<dbReference type="NCBIfam" id="TIGR00576">
    <property type="entry name" value="dut"/>
    <property type="match status" value="1"/>
</dbReference>
<dbReference type="NCBIfam" id="NF001862">
    <property type="entry name" value="PRK00601.1"/>
    <property type="match status" value="1"/>
</dbReference>
<dbReference type="PANTHER" id="PTHR11241">
    <property type="entry name" value="DEOXYURIDINE 5'-TRIPHOSPHATE NUCLEOTIDOHYDROLASE"/>
    <property type="match status" value="1"/>
</dbReference>
<dbReference type="PANTHER" id="PTHR11241:SF0">
    <property type="entry name" value="DEOXYURIDINE 5'-TRIPHOSPHATE NUCLEOTIDOHYDROLASE"/>
    <property type="match status" value="1"/>
</dbReference>
<dbReference type="Pfam" id="PF00692">
    <property type="entry name" value="dUTPase"/>
    <property type="match status" value="1"/>
</dbReference>
<dbReference type="SUPFAM" id="SSF51283">
    <property type="entry name" value="dUTPase-like"/>
    <property type="match status" value="1"/>
</dbReference>
<accession>Q1I2U1</accession>
<organism>
    <name type="scientific">Pseudomonas entomophila (strain L48)</name>
    <dbReference type="NCBI Taxonomy" id="384676"/>
    <lineage>
        <taxon>Bacteria</taxon>
        <taxon>Pseudomonadati</taxon>
        <taxon>Pseudomonadota</taxon>
        <taxon>Gammaproteobacteria</taxon>
        <taxon>Pseudomonadales</taxon>
        <taxon>Pseudomonadaceae</taxon>
        <taxon>Pseudomonas</taxon>
    </lineage>
</organism>
<protein>
    <recommendedName>
        <fullName evidence="1">Deoxyuridine 5'-triphosphate nucleotidohydrolase</fullName>
        <shortName evidence="1">dUTPase</shortName>
        <ecNumber evidence="1">3.6.1.23</ecNumber>
    </recommendedName>
    <alternativeName>
        <fullName evidence="1">dUTP pyrophosphatase</fullName>
    </alternativeName>
</protein>
<keyword id="KW-0378">Hydrolase</keyword>
<keyword id="KW-0460">Magnesium</keyword>
<keyword id="KW-0479">Metal-binding</keyword>
<keyword id="KW-0546">Nucleotide metabolism</keyword>
<sequence>MHALQAKILDPRLGTEFPLPQYATPGSAGLDLRALLKEDTVLEPGQTLLIPTGLSVYIGDPGLAAMILPRSGLGHKHGVVLGNLVGLIDSDYQGELMVSCWNRGNTPFTITIGERIAQLILVPVVQAHFDIVEQFDETQRGTGGFGHSGTR</sequence>